<keyword id="KW-0007">Acetylation</keyword>
<keyword id="KW-0238">DNA-binding</keyword>
<keyword id="KW-1048">Host nucleus</keyword>
<keyword id="KW-0945">Host-virus interaction</keyword>
<keyword id="KW-0426">Late protein</keyword>
<keyword id="KW-0597">Phosphoprotein</keyword>
<keyword id="KW-1185">Reference proteome</keyword>
<keyword id="KW-1163">Viral penetration into host nucleus</keyword>
<keyword id="KW-0946">Virion</keyword>
<keyword id="KW-1160">Virus entry into host cell</keyword>
<sequence>MSILISPDNNTGWGLCSAGMYGGAKRRSSQHPVRVRGHYRAPWGAYTRGVISRRTTVDDVIDSVVADAQRYTRPVATSTVDSVIDSVVANARRYAQRKRRLQRRRRRPTAAMTAARAVLRRAQRIGRRAMRRAAASASAGRARRQAARQAAAAIASMAQPRRGNIYWVRDASGVRVPVRSRPPRS</sequence>
<evidence type="ECO:0000255" key="1">
    <source>
        <dbReference type="HAMAP-Rule" id="MF_04056"/>
    </source>
</evidence>
<evidence type="ECO:0000305" key="2"/>
<comment type="function">
    <text evidence="1">Plays a role in the inhibition of host immune response within the nucleus. Interacts with cellular nucleosomes and immobilizes the host immune danger signal HMGB1 on chromatin. In turn, prevents HMGB1 release out of the cell and thus decreases inflammation. Also plays a role in the wrapping and condensation of the viral DNA. May also promote viral genome import into the nucleus.</text>
</comment>
<comment type="subunit">
    <text evidence="1">Interacts with the core-capsid bridging protein; this interaction bridges the virus core to the capsid. Interacts with host NPM1; this interaction might play a role in placing the pre-histone-like nucleoprotein on the viral DNA or regulating viral gene expression. Interacts with host HMGB1; this interaction inhibits host immune response.</text>
</comment>
<comment type="subcellular location">
    <molecule>Histone-like nucleoprotein</molecule>
    <subcellularLocation>
        <location evidence="1">Virion</location>
    </subcellularLocation>
    <text evidence="1">Located inside the capsid in association with the viral DNA (core). Present in about 1070 copies per virion.</text>
</comment>
<comment type="subcellular location">
    <molecule>Pre-histone-like nucleoprotein</molecule>
    <subcellularLocation>
        <location evidence="1">Host nucleus</location>
        <location evidence="1">Host nucleolus</location>
    </subcellularLocation>
</comment>
<comment type="induction">
    <text evidence="1">Expressed in the late phase of the viral replicative cycle.</text>
</comment>
<comment type="PTM">
    <text evidence="1">Cleaved near the N-terminus by the viral protease during virion maturation to form the mature protein.</text>
</comment>
<comment type="miscellaneous">
    <text evidence="1">All late proteins expressed from the major late promoter are produced by alternative splicing and alternative polyadenylation of the same gene giving rise to non-overlapping ORFs. A leader sequence is present in the N-terminus of all these mRNAs and is recognized by the viral shutoff protein to provide expression although conventional translation via ribosome scanning from the cap has been shut off in the host cell.</text>
</comment>
<comment type="similarity">
    <text evidence="1 2">Belongs to the adenoviridae histone-like nucleoprotein family.</text>
</comment>
<name>NP_ADE40</name>
<organism>
    <name type="scientific">Human adenovirus F serotype 40</name>
    <name type="common">HAdV-40</name>
    <name type="synonym">Human adenovirus 40</name>
    <dbReference type="NCBI Taxonomy" id="28284"/>
    <lineage>
        <taxon>Viruses</taxon>
        <taxon>Varidnaviria</taxon>
        <taxon>Bamfordvirae</taxon>
        <taxon>Preplasmiviricota</taxon>
        <taxon>Tectiliviricetes</taxon>
        <taxon>Rowavirales</taxon>
        <taxon>Adenoviridae</taxon>
        <taxon>Mastadenovirus</taxon>
        <taxon>Human mastadenovirus F</taxon>
    </lineage>
</organism>
<reference key="1">
    <citation type="journal article" date="1993" name="J. Mol. Biol.">
        <title>The DNA sequence of adenovirus type 40.</title>
        <authorList>
            <person name="Davison A.J."/>
            <person name="Telford E.A."/>
            <person name="Watson M.S."/>
            <person name="McBride K."/>
            <person name="Mautner V."/>
        </authorList>
    </citation>
    <scope>NUCLEOTIDE SEQUENCE [LARGE SCALE GENOMIC DNA]</scope>
    <source>
        <strain>Dugan</strain>
    </source>
</reference>
<reference key="2">
    <citation type="submission" date="1992-02" db="EMBL/GenBank/DDBJ databases">
        <authorList>
            <person name="Pieniazek N.J."/>
            <person name="Slemenda S.B."/>
            <person name="Pieniazek D."/>
            <person name="Luftig R.B."/>
        </authorList>
    </citation>
    <scope>NUCLEOTIDE SEQUENCE [GENOMIC DNA]</scope>
    <source>
        <strain>Dugan</strain>
    </source>
</reference>
<gene>
    <name evidence="1" type="primary">L2</name>
</gene>
<protein>
    <recommendedName>
        <fullName evidence="1">Pre-histone-like nucleoprotein</fullName>
    </recommendedName>
    <alternativeName>
        <fullName evidence="1">Pre-core protein VII</fullName>
        <shortName evidence="1">pVII</shortName>
    </alternativeName>
    <component>
        <recommendedName>
            <fullName evidence="1">Histone-like nucleoprotein</fullName>
            <shortName evidence="1">NP</shortName>
        </recommendedName>
        <alternativeName>
            <fullName evidence="1">Core protein VII</fullName>
        </alternativeName>
    </component>
</protein>
<organismHost>
    <name type="scientific">Homo sapiens</name>
    <name type="common">Human</name>
    <dbReference type="NCBI Taxonomy" id="9606"/>
</organismHost>
<proteinExistence type="inferred from homology"/>
<accession>Q89532</accession>
<feature type="initiator methionine" description="Removed" evidence="1">
    <location>
        <position position="1"/>
    </location>
</feature>
<feature type="chain" id="PRO_0000421435" description="Pre-histone-like nucleoprotein" evidence="1">
    <location>
        <begin position="2"/>
        <end position="185"/>
    </location>
</feature>
<feature type="propeptide" id="PRO_0000036581" evidence="1">
    <location>
        <begin position="2"/>
        <end position="23"/>
    </location>
</feature>
<feature type="chain" id="PRO_0000036582" description="Histone-like nucleoprotein" evidence="1">
    <location>
        <begin position="24"/>
        <end position="185"/>
    </location>
</feature>
<feature type="short sequence motif" description="Nuclear localization signal" evidence="1">
    <location>
        <begin position="175"/>
        <end position="185"/>
    </location>
</feature>
<feature type="site" description="Cleavage; by viral protease" evidence="1">
    <location>
        <begin position="23"/>
        <end position="24"/>
    </location>
</feature>
<feature type="modified residue" description="N-acetylserine; by host" evidence="1">
    <location>
        <position position="2"/>
    </location>
</feature>
<feature type="modified residue" description="Phosphothreonine; by host" evidence="1">
    <location>
        <position position="55"/>
    </location>
</feature>
<feature type="modified residue" description="Phosphoserine; by host" evidence="1">
    <location>
        <position position="172"/>
    </location>
</feature>
<dbReference type="EMBL" id="L19443">
    <property type="protein sequence ID" value="AAC13963.1"/>
    <property type="molecule type" value="Genomic_DNA"/>
</dbReference>
<dbReference type="EMBL" id="M86665">
    <property type="protein sequence ID" value="AAA42526.1"/>
    <property type="molecule type" value="Genomic_DNA"/>
</dbReference>
<dbReference type="RefSeq" id="NP_040858.1">
    <property type="nucleotide sequence ID" value="NC_001454.1"/>
</dbReference>
<dbReference type="DNASU" id="2715931"/>
<dbReference type="GeneID" id="2715931"/>
<dbReference type="Proteomes" id="UP000151954">
    <property type="component" value="Segment"/>
</dbReference>
<dbReference type="GO" id="GO:0043657">
    <property type="term" value="C:host cell"/>
    <property type="evidence" value="ECO:0007669"/>
    <property type="project" value="GOC"/>
</dbReference>
<dbReference type="GO" id="GO:0044196">
    <property type="term" value="C:host cell nucleolus"/>
    <property type="evidence" value="ECO:0007669"/>
    <property type="project" value="UniProtKB-SubCell"/>
</dbReference>
<dbReference type="GO" id="GO:0019028">
    <property type="term" value="C:viral capsid"/>
    <property type="evidence" value="ECO:0007669"/>
    <property type="project" value="InterPro"/>
</dbReference>
<dbReference type="GO" id="GO:0003677">
    <property type="term" value="F:DNA binding"/>
    <property type="evidence" value="ECO:0007669"/>
    <property type="project" value="UniProtKB-UniRule"/>
</dbReference>
<dbReference type="GO" id="GO:0046718">
    <property type="term" value="P:symbiont entry into host cell"/>
    <property type="evidence" value="ECO:0007669"/>
    <property type="project" value="UniProtKB-UniRule"/>
</dbReference>
<dbReference type="GO" id="GO:0075732">
    <property type="term" value="P:viral penetration into host nucleus"/>
    <property type="evidence" value="ECO:0007669"/>
    <property type="project" value="UniProtKB-UniRule"/>
</dbReference>
<dbReference type="HAMAP" id="MF_04056">
    <property type="entry name" value="ADV_PVII"/>
    <property type="match status" value="1"/>
</dbReference>
<dbReference type="InterPro" id="IPR004912">
    <property type="entry name" value="Adeno_VII"/>
</dbReference>
<dbReference type="Pfam" id="PF03228">
    <property type="entry name" value="Adeno_VII"/>
    <property type="match status" value="1"/>
</dbReference>